<evidence type="ECO:0000255" key="1">
    <source>
        <dbReference type="HAMAP-Rule" id="MF_00003"/>
    </source>
</evidence>
<proteinExistence type="inferred from homology"/>
<protein>
    <recommendedName>
        <fullName evidence="1">Ribosome-binding factor A</fullName>
    </recommendedName>
</protein>
<dbReference type="EMBL" id="CP000829">
    <property type="protein sequence ID" value="ACI61614.1"/>
    <property type="molecule type" value="Genomic_DNA"/>
</dbReference>
<dbReference type="SMR" id="B5XHV2"/>
<dbReference type="KEGG" id="soz:Spy49_1336c"/>
<dbReference type="HOGENOM" id="CLU_089475_3_0_9"/>
<dbReference type="Proteomes" id="UP000001039">
    <property type="component" value="Chromosome"/>
</dbReference>
<dbReference type="GO" id="GO:0005829">
    <property type="term" value="C:cytosol"/>
    <property type="evidence" value="ECO:0007669"/>
    <property type="project" value="TreeGrafter"/>
</dbReference>
<dbReference type="GO" id="GO:0043024">
    <property type="term" value="F:ribosomal small subunit binding"/>
    <property type="evidence" value="ECO:0007669"/>
    <property type="project" value="TreeGrafter"/>
</dbReference>
<dbReference type="GO" id="GO:0030490">
    <property type="term" value="P:maturation of SSU-rRNA"/>
    <property type="evidence" value="ECO:0007669"/>
    <property type="project" value="UniProtKB-UniRule"/>
</dbReference>
<dbReference type="Gene3D" id="3.30.300.20">
    <property type="match status" value="1"/>
</dbReference>
<dbReference type="HAMAP" id="MF_00003">
    <property type="entry name" value="RbfA"/>
    <property type="match status" value="1"/>
</dbReference>
<dbReference type="InterPro" id="IPR015946">
    <property type="entry name" value="KH_dom-like_a/b"/>
</dbReference>
<dbReference type="InterPro" id="IPR000238">
    <property type="entry name" value="RbfA"/>
</dbReference>
<dbReference type="InterPro" id="IPR023799">
    <property type="entry name" value="RbfA_dom_sf"/>
</dbReference>
<dbReference type="InterPro" id="IPR020053">
    <property type="entry name" value="Ribosome-bd_factorA_CS"/>
</dbReference>
<dbReference type="NCBIfam" id="TIGR00082">
    <property type="entry name" value="rbfA"/>
    <property type="match status" value="1"/>
</dbReference>
<dbReference type="PANTHER" id="PTHR33515">
    <property type="entry name" value="RIBOSOME-BINDING FACTOR A, CHLOROPLASTIC-RELATED"/>
    <property type="match status" value="1"/>
</dbReference>
<dbReference type="PANTHER" id="PTHR33515:SF1">
    <property type="entry name" value="RIBOSOME-BINDING FACTOR A, CHLOROPLASTIC-RELATED"/>
    <property type="match status" value="1"/>
</dbReference>
<dbReference type="Pfam" id="PF02033">
    <property type="entry name" value="RBFA"/>
    <property type="match status" value="1"/>
</dbReference>
<dbReference type="SUPFAM" id="SSF89919">
    <property type="entry name" value="Ribosome-binding factor A, RbfA"/>
    <property type="match status" value="1"/>
</dbReference>
<dbReference type="PROSITE" id="PS01319">
    <property type="entry name" value="RBFA"/>
    <property type="match status" value="1"/>
</dbReference>
<feature type="chain" id="PRO_1000088937" description="Ribosome-binding factor A">
    <location>
        <begin position="1"/>
        <end position="116"/>
    </location>
</feature>
<keyword id="KW-0963">Cytoplasm</keyword>
<keyword id="KW-0690">Ribosome biogenesis</keyword>
<accession>B5XHV2</accession>
<gene>
    <name evidence="1" type="primary">rbfA</name>
    <name type="ordered locus">Spy49_1336c</name>
</gene>
<reference key="1">
    <citation type="journal article" date="2008" name="J. Bacteriol.">
        <title>Genome sequence of a nephritogenic and highly transformable M49 strain of Streptococcus pyogenes.</title>
        <authorList>
            <person name="McShan W.M."/>
            <person name="Ferretti J.J."/>
            <person name="Karasawa T."/>
            <person name="Suvorov A.N."/>
            <person name="Lin S."/>
            <person name="Qin B."/>
            <person name="Jia H."/>
            <person name="Kenton S."/>
            <person name="Najar F."/>
            <person name="Wu H."/>
            <person name="Scott J."/>
            <person name="Roe B.A."/>
            <person name="Savic D.J."/>
        </authorList>
    </citation>
    <scope>NUCLEOTIDE SEQUENCE [LARGE SCALE GENOMIC DNA]</scope>
    <source>
        <strain>NZ131</strain>
    </source>
</reference>
<organism>
    <name type="scientific">Streptococcus pyogenes serotype M49 (strain NZ131)</name>
    <dbReference type="NCBI Taxonomy" id="471876"/>
    <lineage>
        <taxon>Bacteria</taxon>
        <taxon>Bacillati</taxon>
        <taxon>Bacillota</taxon>
        <taxon>Bacilli</taxon>
        <taxon>Lactobacillales</taxon>
        <taxon>Streptococcaceae</taxon>
        <taxon>Streptococcus</taxon>
    </lineage>
</organism>
<comment type="function">
    <text evidence="1">One of several proteins that assist in the late maturation steps of the functional core of the 30S ribosomal subunit. Associates with free 30S ribosomal subunits (but not with 30S subunits that are part of 70S ribosomes or polysomes). Required for efficient processing of 16S rRNA. May interact with the 5'-terminal helix region of 16S rRNA.</text>
</comment>
<comment type="subunit">
    <text evidence="1">Monomer. Binds 30S ribosomal subunits, but not 50S ribosomal subunits or 70S ribosomes.</text>
</comment>
<comment type="subcellular location">
    <subcellularLocation>
        <location evidence="1">Cytoplasm</location>
    </subcellularLocation>
</comment>
<comment type="similarity">
    <text evidence="1">Belongs to the RbfA family.</text>
</comment>
<sequence length="116" mass="13268">MANHRIDRVGMEIKREVNDILQKKVRDPRVQGVTITEVQMQGDLSLAKVYYTIMSDLASDNQKAQTGLEKATGTIKRELGKQLTMYKIPDLVFEKDNSIAYGNKIDQLLRELDKKD</sequence>
<name>RBFA_STRPZ</name>